<organism>
    <name type="scientific">Escherichia coli (strain SMS-3-5 / SECEC)</name>
    <dbReference type="NCBI Taxonomy" id="439855"/>
    <lineage>
        <taxon>Bacteria</taxon>
        <taxon>Pseudomonadati</taxon>
        <taxon>Pseudomonadota</taxon>
        <taxon>Gammaproteobacteria</taxon>
        <taxon>Enterobacterales</taxon>
        <taxon>Enterobacteriaceae</taxon>
        <taxon>Escherichia</taxon>
    </lineage>
</organism>
<reference key="1">
    <citation type="journal article" date="2008" name="J. Bacteriol.">
        <title>Insights into the environmental resistance gene pool from the genome sequence of the multidrug-resistant environmental isolate Escherichia coli SMS-3-5.</title>
        <authorList>
            <person name="Fricke W.F."/>
            <person name="Wright M.S."/>
            <person name="Lindell A.H."/>
            <person name="Harkins D.M."/>
            <person name="Baker-Austin C."/>
            <person name="Ravel J."/>
            <person name="Stepanauskas R."/>
        </authorList>
    </citation>
    <scope>NUCLEOTIDE SEQUENCE [LARGE SCALE GENOMIC DNA]</scope>
    <source>
        <strain>SMS-3-5 / SECEC</strain>
    </source>
</reference>
<keyword id="KW-0030">Aminoacyl-tRNA synthetase</keyword>
<keyword id="KW-0067">ATP-binding</keyword>
<keyword id="KW-0963">Cytoplasm</keyword>
<keyword id="KW-0436">Ligase</keyword>
<keyword id="KW-0547">Nucleotide-binding</keyword>
<keyword id="KW-0648">Protein biosynthesis</keyword>
<name>SYR_ECOSM</name>
<protein>
    <recommendedName>
        <fullName evidence="1">Arginine--tRNA ligase</fullName>
        <ecNumber evidence="1">6.1.1.19</ecNumber>
    </recommendedName>
    <alternativeName>
        <fullName evidence="1">Arginyl-tRNA synthetase</fullName>
        <shortName evidence="1">ArgRS</shortName>
    </alternativeName>
</protein>
<proteinExistence type="inferred from homology"/>
<evidence type="ECO:0000255" key="1">
    <source>
        <dbReference type="HAMAP-Rule" id="MF_00123"/>
    </source>
</evidence>
<sequence length="577" mass="64669">MNIQALLSEKVRQAMIAAGAPADCEPQVRQSAKVQFGDYQANGMMAVAKKLGMAPRQLAEQVLTHLDLNGIASKVEIAGPGFINIFLDPAFLADHVQQALASDRLGVATPEKQTIVVDYSAPNVAKEMHVGHLRSTIIGDAAVRTLEFLGHKVIRANHVGDWGTQFGMLIAWLEKQQQENAGEMELADLEGFYRDAKKHYDEDEEFAERARNYVVKLQSGDEYFREMWRKLVDITMTQNQITYDRLNVTLTRDDVMGESLYNPMLPGIVADLKAKGLAVESEGATVVFLDEFKNKEGEPMGVIIQKKDGGYLYTTTDIACAKYRYETLHADRVLYYIDSRQHQHLMQAWAIVRKAGYVPESVPLEHHMFGMMLGKDGKPFKTRAGGTVKLADLLDEALERARRLVAEKNPDMPADELEKLANAVGIGAVKYADLSKNRTTDYIFDWDNMLAFEGNTAPYMQYAYTRVLSVFRKAEIDEEQLAAAPVIIREDREAQLAARLLQFEETLTVVAREGTPHVMCAYLYDLAGLFSGFYEHCPILSAENEEVRNSRLKLAQLTAKTLKLGLDTLGIETVERM</sequence>
<comment type="catalytic activity">
    <reaction evidence="1">
        <text>tRNA(Arg) + L-arginine + ATP = L-arginyl-tRNA(Arg) + AMP + diphosphate</text>
        <dbReference type="Rhea" id="RHEA:20301"/>
        <dbReference type="Rhea" id="RHEA-COMP:9658"/>
        <dbReference type="Rhea" id="RHEA-COMP:9673"/>
        <dbReference type="ChEBI" id="CHEBI:30616"/>
        <dbReference type="ChEBI" id="CHEBI:32682"/>
        <dbReference type="ChEBI" id="CHEBI:33019"/>
        <dbReference type="ChEBI" id="CHEBI:78442"/>
        <dbReference type="ChEBI" id="CHEBI:78513"/>
        <dbReference type="ChEBI" id="CHEBI:456215"/>
        <dbReference type="EC" id="6.1.1.19"/>
    </reaction>
</comment>
<comment type="subunit">
    <text evidence="1">Monomer.</text>
</comment>
<comment type="subcellular location">
    <subcellularLocation>
        <location evidence="1">Cytoplasm</location>
    </subcellularLocation>
</comment>
<comment type="similarity">
    <text evidence="1">Belongs to the class-I aminoacyl-tRNA synthetase family.</text>
</comment>
<accession>B1LCZ5</accession>
<dbReference type="EC" id="6.1.1.19" evidence="1"/>
<dbReference type="EMBL" id="CP000970">
    <property type="protein sequence ID" value="ACB19180.1"/>
    <property type="molecule type" value="Genomic_DNA"/>
</dbReference>
<dbReference type="RefSeq" id="WP_001025308.1">
    <property type="nucleotide sequence ID" value="NC_010498.1"/>
</dbReference>
<dbReference type="SMR" id="B1LCZ5"/>
<dbReference type="KEGG" id="ecm:EcSMS35_1310"/>
<dbReference type="HOGENOM" id="CLU_006406_5_1_6"/>
<dbReference type="Proteomes" id="UP000007011">
    <property type="component" value="Chromosome"/>
</dbReference>
<dbReference type="GO" id="GO:0005737">
    <property type="term" value="C:cytoplasm"/>
    <property type="evidence" value="ECO:0007669"/>
    <property type="project" value="UniProtKB-SubCell"/>
</dbReference>
<dbReference type="GO" id="GO:0004814">
    <property type="term" value="F:arginine-tRNA ligase activity"/>
    <property type="evidence" value="ECO:0007669"/>
    <property type="project" value="UniProtKB-UniRule"/>
</dbReference>
<dbReference type="GO" id="GO:0005524">
    <property type="term" value="F:ATP binding"/>
    <property type="evidence" value="ECO:0007669"/>
    <property type="project" value="UniProtKB-UniRule"/>
</dbReference>
<dbReference type="GO" id="GO:0006420">
    <property type="term" value="P:arginyl-tRNA aminoacylation"/>
    <property type="evidence" value="ECO:0007669"/>
    <property type="project" value="UniProtKB-UniRule"/>
</dbReference>
<dbReference type="CDD" id="cd07956">
    <property type="entry name" value="Anticodon_Ia_Arg"/>
    <property type="match status" value="1"/>
</dbReference>
<dbReference type="CDD" id="cd00671">
    <property type="entry name" value="ArgRS_core"/>
    <property type="match status" value="1"/>
</dbReference>
<dbReference type="FunFam" id="1.10.730.10:FF:000001">
    <property type="entry name" value="Arginine--tRNA ligase"/>
    <property type="match status" value="1"/>
</dbReference>
<dbReference type="FunFam" id="3.30.1360.70:FF:000001">
    <property type="entry name" value="Arginine--tRNA ligase"/>
    <property type="match status" value="1"/>
</dbReference>
<dbReference type="FunFam" id="3.40.50.620:FF:000030">
    <property type="entry name" value="Arginine--tRNA ligase"/>
    <property type="match status" value="1"/>
</dbReference>
<dbReference type="Gene3D" id="3.30.1360.70">
    <property type="entry name" value="Arginyl tRNA synthetase N-terminal domain"/>
    <property type="match status" value="1"/>
</dbReference>
<dbReference type="Gene3D" id="3.40.50.620">
    <property type="entry name" value="HUPs"/>
    <property type="match status" value="1"/>
</dbReference>
<dbReference type="Gene3D" id="1.10.730.10">
    <property type="entry name" value="Isoleucyl-tRNA Synthetase, Domain 1"/>
    <property type="match status" value="1"/>
</dbReference>
<dbReference type="HAMAP" id="MF_00123">
    <property type="entry name" value="Arg_tRNA_synth"/>
    <property type="match status" value="1"/>
</dbReference>
<dbReference type="InterPro" id="IPR001412">
    <property type="entry name" value="aa-tRNA-synth_I_CS"/>
</dbReference>
<dbReference type="InterPro" id="IPR001278">
    <property type="entry name" value="Arg-tRNA-ligase"/>
</dbReference>
<dbReference type="InterPro" id="IPR005148">
    <property type="entry name" value="Arg-tRNA-synth_N"/>
</dbReference>
<dbReference type="InterPro" id="IPR036695">
    <property type="entry name" value="Arg-tRNA-synth_N_sf"/>
</dbReference>
<dbReference type="InterPro" id="IPR035684">
    <property type="entry name" value="ArgRS_core"/>
</dbReference>
<dbReference type="InterPro" id="IPR008909">
    <property type="entry name" value="DALR_anticod-bd"/>
</dbReference>
<dbReference type="InterPro" id="IPR014729">
    <property type="entry name" value="Rossmann-like_a/b/a_fold"/>
</dbReference>
<dbReference type="InterPro" id="IPR009080">
    <property type="entry name" value="tRNAsynth_Ia_anticodon-bd"/>
</dbReference>
<dbReference type="NCBIfam" id="TIGR00456">
    <property type="entry name" value="argS"/>
    <property type="match status" value="1"/>
</dbReference>
<dbReference type="PANTHER" id="PTHR11956:SF5">
    <property type="entry name" value="ARGININE--TRNA LIGASE, CYTOPLASMIC"/>
    <property type="match status" value="1"/>
</dbReference>
<dbReference type="PANTHER" id="PTHR11956">
    <property type="entry name" value="ARGINYL-TRNA SYNTHETASE"/>
    <property type="match status" value="1"/>
</dbReference>
<dbReference type="Pfam" id="PF03485">
    <property type="entry name" value="Arg_tRNA_synt_N"/>
    <property type="match status" value="1"/>
</dbReference>
<dbReference type="Pfam" id="PF05746">
    <property type="entry name" value="DALR_1"/>
    <property type="match status" value="1"/>
</dbReference>
<dbReference type="Pfam" id="PF00750">
    <property type="entry name" value="tRNA-synt_1d"/>
    <property type="match status" value="1"/>
</dbReference>
<dbReference type="PRINTS" id="PR01038">
    <property type="entry name" value="TRNASYNTHARG"/>
</dbReference>
<dbReference type="SMART" id="SM01016">
    <property type="entry name" value="Arg_tRNA_synt_N"/>
    <property type="match status" value="1"/>
</dbReference>
<dbReference type="SMART" id="SM00836">
    <property type="entry name" value="DALR_1"/>
    <property type="match status" value="1"/>
</dbReference>
<dbReference type="SUPFAM" id="SSF47323">
    <property type="entry name" value="Anticodon-binding domain of a subclass of class I aminoacyl-tRNA synthetases"/>
    <property type="match status" value="1"/>
</dbReference>
<dbReference type="SUPFAM" id="SSF55190">
    <property type="entry name" value="Arginyl-tRNA synthetase (ArgRS), N-terminal 'additional' domain"/>
    <property type="match status" value="1"/>
</dbReference>
<dbReference type="SUPFAM" id="SSF52374">
    <property type="entry name" value="Nucleotidylyl transferase"/>
    <property type="match status" value="1"/>
</dbReference>
<dbReference type="PROSITE" id="PS00178">
    <property type="entry name" value="AA_TRNA_LIGASE_I"/>
    <property type="match status" value="1"/>
</dbReference>
<gene>
    <name evidence="1" type="primary">argS</name>
    <name type="ordered locus">EcSMS35_1310</name>
</gene>
<feature type="chain" id="PRO_1000198902" description="Arginine--tRNA ligase">
    <location>
        <begin position="1"/>
        <end position="577"/>
    </location>
</feature>
<feature type="short sequence motif" description="'HIGH' region">
    <location>
        <begin position="122"/>
        <end position="132"/>
    </location>
</feature>